<evidence type="ECO:0000255" key="1">
    <source>
        <dbReference type="HAMAP-Rule" id="MF_00254"/>
    </source>
</evidence>
<comment type="catalytic activity">
    <reaction evidence="1">
        <text>tRNA(Gly) + glycine + ATP = glycyl-tRNA(Gly) + AMP + diphosphate</text>
        <dbReference type="Rhea" id="RHEA:16013"/>
        <dbReference type="Rhea" id="RHEA-COMP:9664"/>
        <dbReference type="Rhea" id="RHEA-COMP:9683"/>
        <dbReference type="ChEBI" id="CHEBI:30616"/>
        <dbReference type="ChEBI" id="CHEBI:33019"/>
        <dbReference type="ChEBI" id="CHEBI:57305"/>
        <dbReference type="ChEBI" id="CHEBI:78442"/>
        <dbReference type="ChEBI" id="CHEBI:78522"/>
        <dbReference type="ChEBI" id="CHEBI:456215"/>
        <dbReference type="EC" id="6.1.1.14"/>
    </reaction>
</comment>
<comment type="subunit">
    <text evidence="1">Tetramer of two alpha and two beta subunits.</text>
</comment>
<comment type="subcellular location">
    <subcellularLocation>
        <location evidence="1">Cytoplasm</location>
    </subcellularLocation>
</comment>
<comment type="similarity">
    <text evidence="1">Belongs to the class-II aminoacyl-tRNA synthetase family.</text>
</comment>
<accession>B2K7F7</accession>
<dbReference type="EC" id="6.1.1.14" evidence="1"/>
<dbReference type="EMBL" id="CP001048">
    <property type="protein sequence ID" value="ACC91079.1"/>
    <property type="molecule type" value="Genomic_DNA"/>
</dbReference>
<dbReference type="RefSeq" id="WP_002209624.1">
    <property type="nucleotide sequence ID" value="NZ_CP009780.1"/>
</dbReference>
<dbReference type="SMR" id="B2K7F7"/>
<dbReference type="GeneID" id="96663419"/>
<dbReference type="KEGG" id="ypb:YPTS_4133"/>
<dbReference type="PATRIC" id="fig|502801.10.peg.3608"/>
<dbReference type="GO" id="GO:0005829">
    <property type="term" value="C:cytosol"/>
    <property type="evidence" value="ECO:0007669"/>
    <property type="project" value="TreeGrafter"/>
</dbReference>
<dbReference type="GO" id="GO:0005524">
    <property type="term" value="F:ATP binding"/>
    <property type="evidence" value="ECO:0007669"/>
    <property type="project" value="UniProtKB-UniRule"/>
</dbReference>
<dbReference type="GO" id="GO:0004820">
    <property type="term" value="F:glycine-tRNA ligase activity"/>
    <property type="evidence" value="ECO:0007669"/>
    <property type="project" value="UniProtKB-UniRule"/>
</dbReference>
<dbReference type="GO" id="GO:0006426">
    <property type="term" value="P:glycyl-tRNA aminoacylation"/>
    <property type="evidence" value="ECO:0007669"/>
    <property type="project" value="UniProtKB-UniRule"/>
</dbReference>
<dbReference type="CDD" id="cd00733">
    <property type="entry name" value="GlyRS_alpha_core"/>
    <property type="match status" value="1"/>
</dbReference>
<dbReference type="FunFam" id="1.20.58.180:FF:000001">
    <property type="entry name" value="Glycine--tRNA ligase alpha subunit"/>
    <property type="match status" value="1"/>
</dbReference>
<dbReference type="FunFam" id="3.30.930.10:FF:000006">
    <property type="entry name" value="Glycine--tRNA ligase alpha subunit"/>
    <property type="match status" value="1"/>
</dbReference>
<dbReference type="Gene3D" id="3.30.930.10">
    <property type="entry name" value="Bira Bifunctional Protein, Domain 2"/>
    <property type="match status" value="1"/>
</dbReference>
<dbReference type="Gene3D" id="1.20.58.180">
    <property type="entry name" value="Class II aaRS and biotin synthetases, domain 2"/>
    <property type="match status" value="1"/>
</dbReference>
<dbReference type="HAMAP" id="MF_00254">
    <property type="entry name" value="Gly_tRNA_synth_alpha"/>
    <property type="match status" value="1"/>
</dbReference>
<dbReference type="InterPro" id="IPR045864">
    <property type="entry name" value="aa-tRNA-synth_II/BPL/LPL"/>
</dbReference>
<dbReference type="InterPro" id="IPR006194">
    <property type="entry name" value="Gly-tRNA-synth_heterodimer"/>
</dbReference>
<dbReference type="InterPro" id="IPR002310">
    <property type="entry name" value="Gly-tRNA_ligase_asu"/>
</dbReference>
<dbReference type="NCBIfam" id="TIGR00388">
    <property type="entry name" value="glyQ"/>
    <property type="match status" value="1"/>
</dbReference>
<dbReference type="NCBIfam" id="NF006827">
    <property type="entry name" value="PRK09348.1"/>
    <property type="match status" value="1"/>
</dbReference>
<dbReference type="PANTHER" id="PTHR30075:SF2">
    <property type="entry name" value="GLYCINE--TRNA LIGASE, CHLOROPLASTIC_MITOCHONDRIAL 2"/>
    <property type="match status" value="1"/>
</dbReference>
<dbReference type="PANTHER" id="PTHR30075">
    <property type="entry name" value="GLYCYL-TRNA SYNTHETASE"/>
    <property type="match status" value="1"/>
</dbReference>
<dbReference type="Pfam" id="PF02091">
    <property type="entry name" value="tRNA-synt_2e"/>
    <property type="match status" value="1"/>
</dbReference>
<dbReference type="PRINTS" id="PR01044">
    <property type="entry name" value="TRNASYNTHGA"/>
</dbReference>
<dbReference type="SUPFAM" id="SSF55681">
    <property type="entry name" value="Class II aaRS and biotin synthetases"/>
    <property type="match status" value="1"/>
</dbReference>
<dbReference type="PROSITE" id="PS50861">
    <property type="entry name" value="AA_TRNA_LIGASE_II_GLYAB"/>
    <property type="match status" value="1"/>
</dbReference>
<keyword id="KW-0030">Aminoacyl-tRNA synthetase</keyword>
<keyword id="KW-0067">ATP-binding</keyword>
<keyword id="KW-0963">Cytoplasm</keyword>
<keyword id="KW-0436">Ligase</keyword>
<keyword id="KW-0547">Nucleotide-binding</keyword>
<keyword id="KW-0648">Protein biosynthesis</keyword>
<gene>
    <name evidence="1" type="primary">glyQ</name>
    <name type="ordered locus">YPTS_4133</name>
</gene>
<feature type="chain" id="PRO_1000101249" description="Glycine--tRNA ligase alpha subunit">
    <location>
        <begin position="1"/>
        <end position="304"/>
    </location>
</feature>
<protein>
    <recommendedName>
        <fullName evidence="1">Glycine--tRNA ligase alpha subunit</fullName>
        <ecNumber evidence="1">6.1.1.14</ecNumber>
    </recommendedName>
    <alternativeName>
        <fullName evidence="1">Glycyl-tRNA synthetase alpha subunit</fullName>
        <shortName evidence="1">GlyRS</shortName>
    </alternativeName>
</protein>
<sequence length="304" mass="34758">MQKFDTKTFQGLILTLQDYWARQGCTIVQPLDMEVGAGTSHPMTCLRAIGPEPIAAAYVQPSRRPTDGRYGENPNRLQHYYQFQVIIKPSPDNIQELYLGSLKELGLDPTIHDIRFVEDNWENPTLGAWGLGWEVWLNGMEVTQFTYFQQVGGLECKPVTGEITYGLERLAMYIQGVDSVYDLIWCDGPLGTTTYGDIYHQNEVEQSTYNFEYADVDFLFSCFEQYEKEAQSLLALETPLPLPAYERILKAGHTFNLLDARKAISVTERQRYILRIRTLTKAVAEAYYASREALGFPMCKKNQN</sequence>
<proteinExistence type="inferred from homology"/>
<reference key="1">
    <citation type="submission" date="2008-04" db="EMBL/GenBank/DDBJ databases">
        <title>Complete sequence of Yersinia pseudotuberculosis PB1/+.</title>
        <authorList>
            <person name="Copeland A."/>
            <person name="Lucas S."/>
            <person name="Lapidus A."/>
            <person name="Glavina del Rio T."/>
            <person name="Dalin E."/>
            <person name="Tice H."/>
            <person name="Bruce D."/>
            <person name="Goodwin L."/>
            <person name="Pitluck S."/>
            <person name="Munk A.C."/>
            <person name="Brettin T."/>
            <person name="Detter J.C."/>
            <person name="Han C."/>
            <person name="Tapia R."/>
            <person name="Schmutz J."/>
            <person name="Larimer F."/>
            <person name="Land M."/>
            <person name="Hauser L."/>
            <person name="Challacombe J.F."/>
            <person name="Green L."/>
            <person name="Lindler L.E."/>
            <person name="Nikolich M.P."/>
            <person name="Richardson P."/>
        </authorList>
    </citation>
    <scope>NUCLEOTIDE SEQUENCE [LARGE SCALE GENOMIC DNA]</scope>
    <source>
        <strain>PB1/+</strain>
    </source>
</reference>
<organism>
    <name type="scientific">Yersinia pseudotuberculosis serotype IB (strain PB1/+)</name>
    <dbReference type="NCBI Taxonomy" id="502801"/>
    <lineage>
        <taxon>Bacteria</taxon>
        <taxon>Pseudomonadati</taxon>
        <taxon>Pseudomonadota</taxon>
        <taxon>Gammaproteobacteria</taxon>
        <taxon>Enterobacterales</taxon>
        <taxon>Yersiniaceae</taxon>
        <taxon>Yersinia</taxon>
    </lineage>
</organism>
<name>SYGA_YERPB</name>